<proteinExistence type="inferred from homology"/>
<keyword id="KW-0021">Allosteric enzyme</keyword>
<keyword id="KW-0963">Cytoplasm</keyword>
<keyword id="KW-0378">Hydrolase</keyword>
<keyword id="KW-0479">Metal-binding</keyword>
<keyword id="KW-0645">Protease</keyword>
<keyword id="KW-1185">Reference proteome</keyword>
<keyword id="KW-0915">Sodium</keyword>
<keyword id="KW-0888">Threonine protease</keyword>
<evidence type="ECO:0000255" key="1">
    <source>
        <dbReference type="HAMAP-Rule" id="MF_00248"/>
    </source>
</evidence>
<organism>
    <name type="scientific">Wolinella succinogenes (strain ATCC 29543 / DSM 1740 / CCUG 13145 / JCM 31913 / LMG 7466 / NCTC 11488 / FDC 602W)</name>
    <name type="common">Vibrio succinogenes</name>
    <dbReference type="NCBI Taxonomy" id="273121"/>
    <lineage>
        <taxon>Bacteria</taxon>
        <taxon>Pseudomonadati</taxon>
        <taxon>Campylobacterota</taxon>
        <taxon>Epsilonproteobacteria</taxon>
        <taxon>Campylobacterales</taxon>
        <taxon>Helicobacteraceae</taxon>
        <taxon>Wolinella</taxon>
    </lineage>
</organism>
<reference key="1">
    <citation type="journal article" date="2003" name="Proc. Natl. Acad. Sci. U.S.A.">
        <title>Complete genome sequence and analysis of Wolinella succinogenes.</title>
        <authorList>
            <person name="Baar C."/>
            <person name="Eppinger M."/>
            <person name="Raddatz G."/>
            <person name="Simon J."/>
            <person name="Lanz C."/>
            <person name="Klimmek O."/>
            <person name="Nandakumar R."/>
            <person name="Gross R."/>
            <person name="Rosinus A."/>
            <person name="Keller H."/>
            <person name="Jagtap P."/>
            <person name="Linke B."/>
            <person name="Meyer F."/>
            <person name="Lederer H."/>
            <person name="Schuster S.C."/>
        </authorList>
    </citation>
    <scope>NUCLEOTIDE SEQUENCE [LARGE SCALE GENOMIC DNA]</scope>
    <source>
        <strain>ATCC 29543 / DSM 1740 / CCUG 13145 / JCM 31913 / LMG 7466 / NCTC 11488 / FDC 602W</strain>
    </source>
</reference>
<feature type="chain" id="PRO_0000148163" description="ATP-dependent protease subunit HslV">
    <location>
        <begin position="1"/>
        <end position="176"/>
    </location>
</feature>
<feature type="active site" evidence="1">
    <location>
        <position position="5"/>
    </location>
</feature>
<feature type="binding site" evidence="1">
    <location>
        <position position="161"/>
    </location>
    <ligand>
        <name>Na(+)</name>
        <dbReference type="ChEBI" id="CHEBI:29101"/>
    </ligand>
</feature>
<feature type="binding site" evidence="1">
    <location>
        <position position="164"/>
    </location>
    <ligand>
        <name>Na(+)</name>
        <dbReference type="ChEBI" id="CHEBI:29101"/>
    </ligand>
</feature>
<feature type="binding site" evidence="1">
    <location>
        <position position="167"/>
    </location>
    <ligand>
        <name>Na(+)</name>
        <dbReference type="ChEBI" id="CHEBI:29101"/>
    </ligand>
</feature>
<gene>
    <name evidence="1" type="primary">hslV</name>
    <name type="ordered locus">WS1294</name>
</gene>
<name>HSLV_WOLSU</name>
<comment type="function">
    <text evidence="1">Protease subunit of a proteasome-like degradation complex believed to be a general protein degrading machinery.</text>
</comment>
<comment type="catalytic activity">
    <reaction evidence="1">
        <text>ATP-dependent cleavage of peptide bonds with broad specificity.</text>
        <dbReference type="EC" id="3.4.25.2"/>
    </reaction>
</comment>
<comment type="activity regulation">
    <text evidence="1">Allosterically activated by HslU binding.</text>
</comment>
<comment type="subunit">
    <text evidence="1">A double ring-shaped homohexamer of HslV is capped on each side by a ring-shaped HslU homohexamer. The assembly of the HslU/HslV complex is dependent on binding of ATP.</text>
</comment>
<comment type="subcellular location">
    <subcellularLocation>
        <location evidence="1">Cytoplasm</location>
    </subcellularLocation>
</comment>
<comment type="similarity">
    <text evidence="1">Belongs to the peptidase T1B family. HslV subfamily.</text>
</comment>
<accession>Q7M8Z6</accession>
<sequence>MFEATTILAYKGENHSVIGGDGQVTFGNCVLKGNATKIRMLYNGKILSGFAGSTADAFTLFEMFERILENRKGDLVKSVIDFSKEWRKDKYLRRLEAMMIVMDRERLFILSGTGDVVEPEDGKIAAIGSGGNYALSAARALDKFADLPESELVRESLLIAGELCIYTNTNIKLLEL</sequence>
<dbReference type="EC" id="3.4.25.2" evidence="1"/>
<dbReference type="EMBL" id="BX571660">
    <property type="protein sequence ID" value="CAE10372.1"/>
    <property type="molecule type" value="Genomic_DNA"/>
</dbReference>
<dbReference type="RefSeq" id="WP_011139158.1">
    <property type="nucleotide sequence ID" value="NC_005090.1"/>
</dbReference>
<dbReference type="SMR" id="Q7M8Z6"/>
<dbReference type="STRING" id="273121.WS1294"/>
<dbReference type="KEGG" id="wsu:WS1294"/>
<dbReference type="eggNOG" id="COG5405">
    <property type="taxonomic scope" value="Bacteria"/>
</dbReference>
<dbReference type="HOGENOM" id="CLU_093872_1_1_7"/>
<dbReference type="Proteomes" id="UP000000422">
    <property type="component" value="Chromosome"/>
</dbReference>
<dbReference type="GO" id="GO:0009376">
    <property type="term" value="C:HslUV protease complex"/>
    <property type="evidence" value="ECO:0007669"/>
    <property type="project" value="UniProtKB-UniRule"/>
</dbReference>
<dbReference type="GO" id="GO:0005839">
    <property type="term" value="C:proteasome core complex"/>
    <property type="evidence" value="ECO:0007669"/>
    <property type="project" value="InterPro"/>
</dbReference>
<dbReference type="GO" id="GO:0046872">
    <property type="term" value="F:metal ion binding"/>
    <property type="evidence" value="ECO:0007669"/>
    <property type="project" value="UniProtKB-KW"/>
</dbReference>
<dbReference type="GO" id="GO:0004298">
    <property type="term" value="F:threonine-type endopeptidase activity"/>
    <property type="evidence" value="ECO:0007669"/>
    <property type="project" value="UniProtKB-KW"/>
</dbReference>
<dbReference type="GO" id="GO:0051603">
    <property type="term" value="P:proteolysis involved in protein catabolic process"/>
    <property type="evidence" value="ECO:0007669"/>
    <property type="project" value="InterPro"/>
</dbReference>
<dbReference type="CDD" id="cd01913">
    <property type="entry name" value="protease_HslV"/>
    <property type="match status" value="1"/>
</dbReference>
<dbReference type="Gene3D" id="3.60.20.10">
    <property type="entry name" value="Glutamine Phosphoribosylpyrophosphate, subunit 1, domain 1"/>
    <property type="match status" value="1"/>
</dbReference>
<dbReference type="HAMAP" id="MF_00248">
    <property type="entry name" value="HslV"/>
    <property type="match status" value="1"/>
</dbReference>
<dbReference type="InterPro" id="IPR022281">
    <property type="entry name" value="ATP-dep_Prtase_HsIV_su"/>
</dbReference>
<dbReference type="InterPro" id="IPR029055">
    <property type="entry name" value="Ntn_hydrolases_N"/>
</dbReference>
<dbReference type="InterPro" id="IPR001353">
    <property type="entry name" value="Proteasome_sua/b"/>
</dbReference>
<dbReference type="InterPro" id="IPR023333">
    <property type="entry name" value="Proteasome_suB-type"/>
</dbReference>
<dbReference type="NCBIfam" id="TIGR03692">
    <property type="entry name" value="ATP_dep_HslV"/>
    <property type="match status" value="1"/>
</dbReference>
<dbReference type="NCBIfam" id="NF003964">
    <property type="entry name" value="PRK05456.1"/>
    <property type="match status" value="1"/>
</dbReference>
<dbReference type="PANTHER" id="PTHR32194:SF0">
    <property type="entry name" value="ATP-DEPENDENT PROTEASE SUBUNIT HSLV"/>
    <property type="match status" value="1"/>
</dbReference>
<dbReference type="PANTHER" id="PTHR32194">
    <property type="entry name" value="METALLOPROTEASE TLDD"/>
    <property type="match status" value="1"/>
</dbReference>
<dbReference type="Pfam" id="PF00227">
    <property type="entry name" value="Proteasome"/>
    <property type="match status" value="1"/>
</dbReference>
<dbReference type="PIRSF" id="PIRSF039093">
    <property type="entry name" value="HslV"/>
    <property type="match status" value="1"/>
</dbReference>
<dbReference type="SUPFAM" id="SSF56235">
    <property type="entry name" value="N-terminal nucleophile aminohydrolases (Ntn hydrolases)"/>
    <property type="match status" value="1"/>
</dbReference>
<dbReference type="PROSITE" id="PS51476">
    <property type="entry name" value="PROTEASOME_BETA_2"/>
    <property type="match status" value="1"/>
</dbReference>
<protein>
    <recommendedName>
        <fullName evidence="1">ATP-dependent protease subunit HslV</fullName>
        <ecNumber evidence="1">3.4.25.2</ecNumber>
    </recommendedName>
</protein>